<gene>
    <name type="ordered locus">Msed_1933</name>
</gene>
<accession>A4YI21</accession>
<keyword id="KW-1003">Cell membrane</keyword>
<keyword id="KW-0444">Lipid biosynthesis</keyword>
<keyword id="KW-0443">Lipid metabolism</keyword>
<keyword id="KW-0460">Magnesium</keyword>
<keyword id="KW-0472">Membrane</keyword>
<keyword id="KW-0594">Phospholipid biosynthesis</keyword>
<keyword id="KW-1208">Phospholipid metabolism</keyword>
<keyword id="KW-1185">Reference proteome</keyword>
<keyword id="KW-0808">Transferase</keyword>
<keyword id="KW-0812">Transmembrane</keyword>
<keyword id="KW-1133">Transmembrane helix</keyword>
<dbReference type="EC" id="2.5.1.42" evidence="1"/>
<dbReference type="EMBL" id="CP000682">
    <property type="protein sequence ID" value="ABP96073.1"/>
    <property type="molecule type" value="Genomic_DNA"/>
</dbReference>
<dbReference type="SMR" id="A4YI21"/>
<dbReference type="STRING" id="399549.Msed_1933"/>
<dbReference type="KEGG" id="mse:Msed_1933"/>
<dbReference type="eggNOG" id="arCOG00476">
    <property type="taxonomic scope" value="Archaea"/>
</dbReference>
<dbReference type="HOGENOM" id="CLU_073311_1_1_2"/>
<dbReference type="UniPathway" id="UPA00940"/>
<dbReference type="Proteomes" id="UP000000242">
    <property type="component" value="Chromosome"/>
</dbReference>
<dbReference type="GO" id="GO:0005886">
    <property type="term" value="C:plasma membrane"/>
    <property type="evidence" value="ECO:0007669"/>
    <property type="project" value="UniProtKB-SubCell"/>
</dbReference>
<dbReference type="GO" id="GO:0047295">
    <property type="term" value="F:geranylgeranylglycerol-phosphate geranylgeranyltransferase activity"/>
    <property type="evidence" value="ECO:0007669"/>
    <property type="project" value="UniProtKB-UniRule"/>
</dbReference>
<dbReference type="GO" id="GO:0000287">
    <property type="term" value="F:magnesium ion binding"/>
    <property type="evidence" value="ECO:0007669"/>
    <property type="project" value="UniProtKB-UniRule"/>
</dbReference>
<dbReference type="GO" id="GO:0046474">
    <property type="term" value="P:glycerophospholipid biosynthetic process"/>
    <property type="evidence" value="ECO:0007669"/>
    <property type="project" value="UniProtKB-UniRule"/>
</dbReference>
<dbReference type="CDD" id="cd13961">
    <property type="entry name" value="PT_UbiA_DGGGPS"/>
    <property type="match status" value="1"/>
</dbReference>
<dbReference type="Gene3D" id="1.10.357.140">
    <property type="entry name" value="UbiA prenyltransferase"/>
    <property type="match status" value="1"/>
</dbReference>
<dbReference type="HAMAP" id="MF_01286">
    <property type="entry name" value="DGGGP_synth"/>
    <property type="match status" value="1"/>
</dbReference>
<dbReference type="InterPro" id="IPR023547">
    <property type="entry name" value="DGGGP_synth"/>
</dbReference>
<dbReference type="InterPro" id="IPR050475">
    <property type="entry name" value="Prenyltransferase_related"/>
</dbReference>
<dbReference type="InterPro" id="IPR000537">
    <property type="entry name" value="UbiA_prenyltransferase"/>
</dbReference>
<dbReference type="InterPro" id="IPR044878">
    <property type="entry name" value="UbiA_sf"/>
</dbReference>
<dbReference type="PANTHER" id="PTHR42723">
    <property type="entry name" value="CHLOROPHYLL SYNTHASE"/>
    <property type="match status" value="1"/>
</dbReference>
<dbReference type="PANTHER" id="PTHR42723:SF1">
    <property type="entry name" value="CHLOROPHYLL SYNTHASE, CHLOROPLASTIC"/>
    <property type="match status" value="1"/>
</dbReference>
<dbReference type="Pfam" id="PF01040">
    <property type="entry name" value="UbiA"/>
    <property type="match status" value="1"/>
</dbReference>
<name>DGGGP_METS5</name>
<organism>
    <name type="scientific">Metallosphaera sedula (strain ATCC 51363 / DSM 5348 / JCM 9185 / NBRC 15509 / TH2)</name>
    <dbReference type="NCBI Taxonomy" id="399549"/>
    <lineage>
        <taxon>Archaea</taxon>
        <taxon>Thermoproteota</taxon>
        <taxon>Thermoprotei</taxon>
        <taxon>Sulfolobales</taxon>
        <taxon>Sulfolobaceae</taxon>
        <taxon>Metallosphaera</taxon>
    </lineage>
</organism>
<proteinExistence type="inferred from homology"/>
<evidence type="ECO:0000255" key="1">
    <source>
        <dbReference type="HAMAP-Rule" id="MF_01286"/>
    </source>
</evidence>
<comment type="function">
    <text evidence="1">Prenyltransferase that catalyzes the transfer of the geranylgeranyl moiety of geranylgeranyl diphosphate (GGPP) to the C2 hydroxyl of (S)-3-O-geranylgeranylglyceryl phosphate (GGGP). This reaction is the second ether-bond-formation step in the biosynthesis of archaeal membrane lipids.</text>
</comment>
<comment type="catalytic activity">
    <reaction evidence="1">
        <text>sn-3-O-(geranylgeranyl)glycerol 1-phosphate + (2E,6E,10E)-geranylgeranyl diphosphate = 2,3-bis-O-(geranylgeranyl)-sn-glycerol 1-phosphate + diphosphate</text>
        <dbReference type="Rhea" id="RHEA:18109"/>
        <dbReference type="ChEBI" id="CHEBI:33019"/>
        <dbReference type="ChEBI" id="CHEBI:57677"/>
        <dbReference type="ChEBI" id="CHEBI:58756"/>
        <dbReference type="ChEBI" id="CHEBI:58837"/>
        <dbReference type="EC" id="2.5.1.42"/>
    </reaction>
</comment>
<comment type="cofactor">
    <cofactor evidence="1">
        <name>Mg(2+)</name>
        <dbReference type="ChEBI" id="CHEBI:18420"/>
    </cofactor>
</comment>
<comment type="pathway">
    <text evidence="1">Membrane lipid metabolism; glycerophospholipid metabolism.</text>
</comment>
<comment type="subcellular location">
    <subcellularLocation>
        <location evidence="1">Cell membrane</location>
        <topology evidence="1">Multi-pass membrane protein</topology>
    </subcellularLocation>
</comment>
<comment type="similarity">
    <text evidence="1">Belongs to the UbiA prenyltransferase family. DGGGP synthase subfamily.</text>
</comment>
<sequence length="284" mass="30818">MNPFLKLVRIHNVIGAGLGAFTGYVASSMWKIDPTELILAVLVVALVDAGGNAINDVYDVEIDRINKPDRPIPSGAVSLRTATSLSYGLMGVGVILSALQGYLQFLVALLTSVALIFYARDLKRTGIYGNLVVATATALSLFYGGLSYHEGDWLQRIWIPVLYTFLLTLSREIVKGIEDYRGDLANHVNTLATTRGIASAWRVARVALIITEVTSPLPLFLGYNILYGIVLVPFLYITTKAVLAETSEEGASKARSLLKGSAFLGMVAFALGSLPFQFLFHYLP</sequence>
<reference key="1">
    <citation type="journal article" date="2008" name="Appl. Environ. Microbiol.">
        <title>The genome sequence of the metal-mobilizing, extremely thermoacidophilic archaeon Metallosphaera sedula provides insights into bioleaching-associated metabolism.</title>
        <authorList>
            <person name="Auernik K.S."/>
            <person name="Maezato Y."/>
            <person name="Blum P.H."/>
            <person name="Kelly R.M."/>
        </authorList>
    </citation>
    <scope>NUCLEOTIDE SEQUENCE [LARGE SCALE GENOMIC DNA]</scope>
    <source>
        <strain>ATCC 51363 / DSM 5348 / JCM 9185 / NBRC 15509 / TH2</strain>
    </source>
</reference>
<feature type="chain" id="PRO_0000350699" description="Digeranylgeranylglyceryl phosphate synthase">
    <location>
        <begin position="1"/>
        <end position="284"/>
    </location>
</feature>
<feature type="transmembrane region" description="Helical" evidence="1">
    <location>
        <begin position="10"/>
        <end position="30"/>
    </location>
</feature>
<feature type="transmembrane region" description="Helical" evidence="1">
    <location>
        <begin position="37"/>
        <end position="57"/>
    </location>
</feature>
<feature type="transmembrane region" description="Helical" evidence="1">
    <location>
        <begin position="76"/>
        <end position="98"/>
    </location>
</feature>
<feature type="transmembrane region" description="Helical" evidence="1">
    <location>
        <begin position="102"/>
        <end position="119"/>
    </location>
</feature>
<feature type="transmembrane region" description="Helical" evidence="1">
    <location>
        <begin position="126"/>
        <end position="146"/>
    </location>
</feature>
<feature type="transmembrane region" description="Helical" evidence="1">
    <location>
        <begin position="217"/>
        <end position="237"/>
    </location>
</feature>
<feature type="transmembrane region" description="Helical" evidence="1">
    <location>
        <begin position="260"/>
        <end position="280"/>
    </location>
</feature>
<protein>
    <recommendedName>
        <fullName evidence="1">Digeranylgeranylglyceryl phosphate synthase</fullName>
        <shortName evidence="1">DGGGP synthase</shortName>
        <shortName evidence="1">DGGGPS</shortName>
        <ecNumber evidence="1">2.5.1.42</ecNumber>
    </recommendedName>
    <alternativeName>
        <fullName evidence="1">(S)-2,3-di-O-geranylgeranylglyceryl phosphate synthase</fullName>
    </alternativeName>
    <alternativeName>
        <fullName evidence="1">Geranylgeranylglycerol-phosphate geranylgeranyltransferase</fullName>
    </alternativeName>
</protein>